<evidence type="ECO:0000255" key="1">
    <source>
        <dbReference type="HAMAP-Rule" id="MF_01588"/>
    </source>
</evidence>
<evidence type="ECO:0000256" key="2">
    <source>
        <dbReference type="SAM" id="MobiDB-lite"/>
    </source>
</evidence>
<organism>
    <name type="scientific">Halorubrum lacusprofundi (strain ATCC 49239 / DSM 5036 / JCM 8891 / ACAM 34)</name>
    <dbReference type="NCBI Taxonomy" id="416348"/>
    <lineage>
        <taxon>Archaea</taxon>
        <taxon>Methanobacteriati</taxon>
        <taxon>Methanobacteriota</taxon>
        <taxon>Stenosarchaea group</taxon>
        <taxon>Halobacteria</taxon>
        <taxon>Halobacteriales</taxon>
        <taxon>Haloferacaceae</taxon>
        <taxon>Halorubrum</taxon>
    </lineage>
</organism>
<protein>
    <recommendedName>
        <fullName evidence="1">DNA ligase</fullName>
        <ecNumber evidence="1">6.5.1.2</ecNumber>
    </recommendedName>
    <alternativeName>
        <fullName evidence="1">Polydeoxyribonucleotide synthase [NAD(+)]</fullName>
    </alternativeName>
</protein>
<proteinExistence type="inferred from homology"/>
<name>DNLJ_HALLT</name>
<feature type="chain" id="PRO_0000380393" description="DNA ligase">
    <location>
        <begin position="1"/>
        <end position="710"/>
    </location>
</feature>
<feature type="domain" description="BRCT" evidence="1">
    <location>
        <begin position="623"/>
        <end position="710"/>
    </location>
</feature>
<feature type="region of interest" description="Disordered" evidence="2">
    <location>
        <begin position="1"/>
        <end position="36"/>
    </location>
</feature>
<feature type="region of interest" description="Disordered" evidence="2">
    <location>
        <begin position="657"/>
        <end position="689"/>
    </location>
</feature>
<feature type="active site" description="N6-AMP-lysine intermediate" evidence="1">
    <location>
        <position position="149"/>
    </location>
</feature>
<feature type="binding site" evidence="1">
    <location>
        <begin position="63"/>
        <end position="67"/>
    </location>
    <ligand>
        <name>NAD(+)</name>
        <dbReference type="ChEBI" id="CHEBI:57540"/>
    </ligand>
</feature>
<feature type="binding site" evidence="1">
    <location>
        <begin position="111"/>
        <end position="112"/>
    </location>
    <ligand>
        <name>NAD(+)</name>
        <dbReference type="ChEBI" id="CHEBI:57540"/>
    </ligand>
</feature>
<feature type="binding site" evidence="1">
    <location>
        <position position="147"/>
    </location>
    <ligand>
        <name>NAD(+)</name>
        <dbReference type="ChEBI" id="CHEBI:57540"/>
    </ligand>
</feature>
<feature type="binding site" evidence="1">
    <location>
        <position position="170"/>
    </location>
    <ligand>
        <name>NAD(+)</name>
        <dbReference type="ChEBI" id="CHEBI:57540"/>
    </ligand>
</feature>
<feature type="binding site" evidence="1">
    <location>
        <position position="206"/>
    </location>
    <ligand>
        <name>NAD(+)</name>
        <dbReference type="ChEBI" id="CHEBI:57540"/>
    </ligand>
</feature>
<feature type="binding site" evidence="1">
    <location>
        <position position="353"/>
    </location>
    <ligand>
        <name>NAD(+)</name>
        <dbReference type="ChEBI" id="CHEBI:57540"/>
    </ligand>
</feature>
<feature type="binding site" evidence="1">
    <location>
        <position position="444"/>
    </location>
    <ligand>
        <name>Zn(2+)</name>
        <dbReference type="ChEBI" id="CHEBI:29105"/>
    </ligand>
</feature>
<feature type="binding site" evidence="1">
    <location>
        <position position="447"/>
    </location>
    <ligand>
        <name>Zn(2+)</name>
        <dbReference type="ChEBI" id="CHEBI:29105"/>
    </ligand>
</feature>
<feature type="binding site" evidence="1">
    <location>
        <position position="460"/>
    </location>
    <ligand>
        <name>Zn(2+)</name>
        <dbReference type="ChEBI" id="CHEBI:29105"/>
    </ligand>
</feature>
<feature type="binding site" evidence="1">
    <location>
        <position position="466"/>
    </location>
    <ligand>
        <name>Zn(2+)</name>
        <dbReference type="ChEBI" id="CHEBI:29105"/>
    </ligand>
</feature>
<keyword id="KW-0227">DNA damage</keyword>
<keyword id="KW-0234">DNA repair</keyword>
<keyword id="KW-0235">DNA replication</keyword>
<keyword id="KW-0436">Ligase</keyword>
<keyword id="KW-0460">Magnesium</keyword>
<keyword id="KW-0464">Manganese</keyword>
<keyword id="KW-0479">Metal-binding</keyword>
<keyword id="KW-0520">NAD</keyword>
<keyword id="KW-1185">Reference proteome</keyword>
<keyword id="KW-0862">Zinc</keyword>
<gene>
    <name evidence="1" type="primary">ligA</name>
    <name type="ordered locus">Hlac_2645</name>
</gene>
<comment type="function">
    <text evidence="1">DNA ligase that catalyzes the formation of phosphodiester linkages between 5'-phosphoryl and 3'-hydroxyl groups in double-stranded DNA using NAD as a coenzyme and as the energy source for the reaction. It is essential for DNA replication and repair of damaged DNA.</text>
</comment>
<comment type="catalytic activity">
    <reaction evidence="1">
        <text>NAD(+) + (deoxyribonucleotide)n-3'-hydroxyl + 5'-phospho-(deoxyribonucleotide)m = (deoxyribonucleotide)n+m + AMP + beta-nicotinamide D-nucleotide.</text>
        <dbReference type="EC" id="6.5.1.2"/>
    </reaction>
</comment>
<comment type="cofactor">
    <cofactor evidence="1">
        <name>Mg(2+)</name>
        <dbReference type="ChEBI" id="CHEBI:18420"/>
    </cofactor>
    <cofactor evidence="1">
        <name>Mn(2+)</name>
        <dbReference type="ChEBI" id="CHEBI:29035"/>
    </cofactor>
</comment>
<comment type="similarity">
    <text evidence="1">Belongs to the NAD-dependent DNA ligase family. LigA subfamily.</text>
</comment>
<reference key="1">
    <citation type="journal article" date="2016" name="Stand. Genomic Sci.">
        <title>Complete genome sequence of the Antarctic Halorubrum lacusprofundi type strain ACAM 34.</title>
        <authorList>
            <person name="Anderson I.J."/>
            <person name="DasSarma P."/>
            <person name="Lucas S."/>
            <person name="Copeland A."/>
            <person name="Lapidus A."/>
            <person name="Del Rio T.G."/>
            <person name="Tice H."/>
            <person name="Dalin E."/>
            <person name="Bruce D.C."/>
            <person name="Goodwin L."/>
            <person name="Pitluck S."/>
            <person name="Sims D."/>
            <person name="Brettin T.S."/>
            <person name="Detter J.C."/>
            <person name="Han C.S."/>
            <person name="Larimer F."/>
            <person name="Hauser L."/>
            <person name="Land M."/>
            <person name="Ivanova N."/>
            <person name="Richardson P."/>
            <person name="Cavicchioli R."/>
            <person name="DasSarma S."/>
            <person name="Woese C.R."/>
            <person name="Kyrpides N.C."/>
        </authorList>
    </citation>
    <scope>NUCLEOTIDE SEQUENCE [LARGE SCALE GENOMIC DNA]</scope>
    <source>
        <strain>ATCC 49239 / DSM 5036 / JCM 8891 / ACAM 34</strain>
    </source>
</reference>
<accession>B9LU22</accession>
<sequence length="710" mass="77226">MTSSSPRHADPDENPYVEAPPTDFEPVGALSEDEATEQASLLRAAIREHDHRYYLEADPLIPDETYDRLFTRLQELENEFDLPTQNSPTRRVGGEPLDELATVEHVAPMRSIDNATEADAVREFDGRVRKGLDAEGFDSDAVEYVCEPKFDGLSVEVIYEDGEYVRAATRGDGTAGDDVTEQVRTIRSVPGKLRGDPPSRLAVRGEAYMPRDAFKAYNEALMERGEEPFANPRNAAAGTLRQLDPSVVAERPLDIFFFDVLGWENDAEGDSPNRPATHWEEFDTFDAFGLRRANRVERVDDIEGALDYRDRLMADREDLNFAIDGVVIAVDDRANREALGATARAPRWAFAYKFPPRTATTIVEGITVQVGRTGRLTPVAELDPIDVGGVTVSRATLHNPAEIEALGVNVGDCVRIYRAGDVIPYVPEVVEKRSEGTYVFPETCPICDAPVERDGPLAFCTGGLVCPAQLERAVEHWARRDALDIEGLGPERVQQLREAGLVESLPDLYDLAVDDLAALEGWGETSAENLIAELAATRDPPLDDFLAGLGIPDVGATTARALAAHFGDLDAILDADEDALRAVDDVGPEVAESIRTFLDNAENRVAIDGLRERGVDPESVDVETGDALDGLTFVFTGSLSTTRGEAQAHVEAHGADATSSVSGNTDYLVAGESPGRSKRDDADAEGVPVVDEEEFAGLLAERGVAWPPEE</sequence>
<dbReference type="EC" id="6.5.1.2" evidence="1"/>
<dbReference type="EMBL" id="CP001365">
    <property type="protein sequence ID" value="ACM58216.1"/>
    <property type="molecule type" value="Genomic_DNA"/>
</dbReference>
<dbReference type="RefSeq" id="WP_015911326.1">
    <property type="nucleotide sequence ID" value="NC_012029.1"/>
</dbReference>
<dbReference type="SMR" id="B9LU22"/>
<dbReference type="GeneID" id="7400850"/>
<dbReference type="KEGG" id="hla:Hlac_2645"/>
<dbReference type="eggNOG" id="arCOG04754">
    <property type="taxonomic scope" value="Archaea"/>
</dbReference>
<dbReference type="HOGENOM" id="CLU_007764_2_1_2"/>
<dbReference type="Proteomes" id="UP000000740">
    <property type="component" value="Chromosome 1"/>
</dbReference>
<dbReference type="GO" id="GO:0003677">
    <property type="term" value="F:DNA binding"/>
    <property type="evidence" value="ECO:0007669"/>
    <property type="project" value="InterPro"/>
</dbReference>
<dbReference type="GO" id="GO:0003911">
    <property type="term" value="F:DNA ligase (NAD+) activity"/>
    <property type="evidence" value="ECO:0007669"/>
    <property type="project" value="UniProtKB-UniRule"/>
</dbReference>
<dbReference type="GO" id="GO:0046872">
    <property type="term" value="F:metal ion binding"/>
    <property type="evidence" value="ECO:0007669"/>
    <property type="project" value="UniProtKB-KW"/>
</dbReference>
<dbReference type="GO" id="GO:0006281">
    <property type="term" value="P:DNA repair"/>
    <property type="evidence" value="ECO:0007669"/>
    <property type="project" value="UniProtKB-KW"/>
</dbReference>
<dbReference type="GO" id="GO:0006260">
    <property type="term" value="P:DNA replication"/>
    <property type="evidence" value="ECO:0007669"/>
    <property type="project" value="UniProtKB-KW"/>
</dbReference>
<dbReference type="CDD" id="cd17748">
    <property type="entry name" value="BRCT_DNA_ligase_like"/>
    <property type="match status" value="1"/>
</dbReference>
<dbReference type="CDD" id="cd00114">
    <property type="entry name" value="LIGANc"/>
    <property type="match status" value="1"/>
</dbReference>
<dbReference type="FunFam" id="1.10.150.20:FF:000006">
    <property type="entry name" value="DNA ligase"/>
    <property type="match status" value="1"/>
</dbReference>
<dbReference type="Gene3D" id="6.20.10.30">
    <property type="match status" value="1"/>
</dbReference>
<dbReference type="Gene3D" id="1.10.150.20">
    <property type="entry name" value="5' to 3' exonuclease, C-terminal subdomain"/>
    <property type="match status" value="2"/>
</dbReference>
<dbReference type="Gene3D" id="3.40.50.10190">
    <property type="entry name" value="BRCT domain"/>
    <property type="match status" value="1"/>
</dbReference>
<dbReference type="Gene3D" id="3.30.470.30">
    <property type="entry name" value="DNA ligase/mRNA capping enzyme"/>
    <property type="match status" value="1"/>
</dbReference>
<dbReference type="Gene3D" id="1.10.287.610">
    <property type="entry name" value="Helix hairpin bin"/>
    <property type="match status" value="1"/>
</dbReference>
<dbReference type="Gene3D" id="2.40.50.140">
    <property type="entry name" value="Nucleic acid-binding proteins"/>
    <property type="match status" value="1"/>
</dbReference>
<dbReference type="HAMAP" id="MF_01588">
    <property type="entry name" value="DNA_ligase_A"/>
    <property type="match status" value="1"/>
</dbReference>
<dbReference type="InterPro" id="IPR001357">
    <property type="entry name" value="BRCT_dom"/>
</dbReference>
<dbReference type="InterPro" id="IPR036420">
    <property type="entry name" value="BRCT_dom_sf"/>
</dbReference>
<dbReference type="InterPro" id="IPR041663">
    <property type="entry name" value="DisA/LigA_HHH"/>
</dbReference>
<dbReference type="InterPro" id="IPR001679">
    <property type="entry name" value="DNA_ligase"/>
</dbReference>
<dbReference type="InterPro" id="IPR033136">
    <property type="entry name" value="DNA_ligase_CS"/>
</dbReference>
<dbReference type="InterPro" id="IPR013839">
    <property type="entry name" value="DNAligase_adenylation"/>
</dbReference>
<dbReference type="InterPro" id="IPR013840">
    <property type="entry name" value="DNAligase_N"/>
</dbReference>
<dbReference type="InterPro" id="IPR003583">
    <property type="entry name" value="Hlx-hairpin-Hlx_DNA-bd_motif"/>
</dbReference>
<dbReference type="InterPro" id="IPR012340">
    <property type="entry name" value="NA-bd_OB-fold"/>
</dbReference>
<dbReference type="InterPro" id="IPR004150">
    <property type="entry name" value="NAD_DNA_ligase_OB"/>
</dbReference>
<dbReference type="InterPro" id="IPR010994">
    <property type="entry name" value="RuvA_2-like"/>
</dbReference>
<dbReference type="NCBIfam" id="TIGR00575">
    <property type="entry name" value="dnlj"/>
    <property type="match status" value="1"/>
</dbReference>
<dbReference type="NCBIfam" id="NF005932">
    <property type="entry name" value="PRK07956.1"/>
    <property type="match status" value="1"/>
</dbReference>
<dbReference type="NCBIfam" id="NF010931">
    <property type="entry name" value="PRK14351.1"/>
    <property type="match status" value="1"/>
</dbReference>
<dbReference type="PANTHER" id="PTHR23389">
    <property type="entry name" value="CHROMOSOME TRANSMISSION FIDELITY FACTOR 18"/>
    <property type="match status" value="1"/>
</dbReference>
<dbReference type="PANTHER" id="PTHR23389:SF9">
    <property type="entry name" value="DNA LIGASE"/>
    <property type="match status" value="1"/>
</dbReference>
<dbReference type="Pfam" id="PF00533">
    <property type="entry name" value="BRCT"/>
    <property type="match status" value="1"/>
</dbReference>
<dbReference type="Pfam" id="PF01653">
    <property type="entry name" value="DNA_ligase_aden"/>
    <property type="match status" value="1"/>
</dbReference>
<dbReference type="Pfam" id="PF03120">
    <property type="entry name" value="DNA_ligase_OB"/>
    <property type="match status" value="1"/>
</dbReference>
<dbReference type="Pfam" id="PF12826">
    <property type="entry name" value="HHH_2"/>
    <property type="match status" value="1"/>
</dbReference>
<dbReference type="Pfam" id="PF14520">
    <property type="entry name" value="HHH_5"/>
    <property type="match status" value="1"/>
</dbReference>
<dbReference type="PIRSF" id="PIRSF001604">
    <property type="entry name" value="LigA"/>
    <property type="match status" value="1"/>
</dbReference>
<dbReference type="SMART" id="SM00292">
    <property type="entry name" value="BRCT"/>
    <property type="match status" value="1"/>
</dbReference>
<dbReference type="SMART" id="SM00278">
    <property type="entry name" value="HhH1"/>
    <property type="match status" value="4"/>
</dbReference>
<dbReference type="SMART" id="SM00532">
    <property type="entry name" value="LIGANc"/>
    <property type="match status" value="1"/>
</dbReference>
<dbReference type="SUPFAM" id="SSF52113">
    <property type="entry name" value="BRCT domain"/>
    <property type="match status" value="1"/>
</dbReference>
<dbReference type="SUPFAM" id="SSF56091">
    <property type="entry name" value="DNA ligase/mRNA capping enzyme, catalytic domain"/>
    <property type="match status" value="1"/>
</dbReference>
<dbReference type="SUPFAM" id="SSF50249">
    <property type="entry name" value="Nucleic acid-binding proteins"/>
    <property type="match status" value="1"/>
</dbReference>
<dbReference type="SUPFAM" id="SSF47781">
    <property type="entry name" value="RuvA domain 2-like"/>
    <property type="match status" value="1"/>
</dbReference>
<dbReference type="PROSITE" id="PS50172">
    <property type="entry name" value="BRCT"/>
    <property type="match status" value="1"/>
</dbReference>
<dbReference type="PROSITE" id="PS01056">
    <property type="entry name" value="DNA_LIGASE_N2"/>
    <property type="match status" value="1"/>
</dbReference>